<feature type="chain" id="PRO_0000427113" description="ESAT-6-like protein EsxI">
    <location>
        <begin position="1"/>
        <end position="94"/>
    </location>
</feature>
<reference key="1">
    <citation type="journal article" date="2002" name="J. Bacteriol.">
        <title>Whole-genome comparison of Mycobacterium tuberculosis clinical and laboratory strains.</title>
        <authorList>
            <person name="Fleischmann R.D."/>
            <person name="Alland D."/>
            <person name="Eisen J.A."/>
            <person name="Carpenter L."/>
            <person name="White O."/>
            <person name="Peterson J.D."/>
            <person name="DeBoy R.T."/>
            <person name="Dodson R.J."/>
            <person name="Gwinn M.L."/>
            <person name="Haft D.H."/>
            <person name="Hickey E.K."/>
            <person name="Kolonay J.F."/>
            <person name="Nelson W.C."/>
            <person name="Umayam L.A."/>
            <person name="Ermolaeva M.D."/>
            <person name="Salzberg S.L."/>
            <person name="Delcher A."/>
            <person name="Utterback T.R."/>
            <person name="Weidman J.F."/>
            <person name="Khouri H.M."/>
            <person name="Gill J."/>
            <person name="Mikula A."/>
            <person name="Bishai W."/>
            <person name="Jacobs W.R. Jr."/>
            <person name="Venter J.C."/>
            <person name="Fraser C.M."/>
        </authorList>
    </citation>
    <scope>NUCLEOTIDE SEQUENCE [LARGE SCALE GENOMIC DNA]</scope>
    <source>
        <strain>CDC 1551 / Oshkosh</strain>
    </source>
</reference>
<organism>
    <name type="scientific">Mycobacterium tuberculosis (strain CDC 1551 / Oshkosh)</name>
    <dbReference type="NCBI Taxonomy" id="83331"/>
    <lineage>
        <taxon>Bacteria</taxon>
        <taxon>Bacillati</taxon>
        <taxon>Actinomycetota</taxon>
        <taxon>Actinomycetes</taxon>
        <taxon>Mycobacteriales</taxon>
        <taxon>Mycobacteriaceae</taxon>
        <taxon>Mycobacterium</taxon>
        <taxon>Mycobacterium tuberculosis complex</taxon>
    </lineage>
</organism>
<dbReference type="EMBL" id="AE000516">
    <property type="protein sequence ID" value="AAK45317.1"/>
    <property type="molecule type" value="Genomic_DNA"/>
</dbReference>
<dbReference type="PIR" id="D70560">
    <property type="entry name" value="D70560"/>
</dbReference>
<dbReference type="SMR" id="P0DOA8"/>
<dbReference type="KEGG" id="mtc:MT1066"/>
<dbReference type="HOGENOM" id="CLU_192559_0_0_11"/>
<dbReference type="Proteomes" id="UP000001020">
    <property type="component" value="Chromosome"/>
</dbReference>
<dbReference type="GO" id="GO:0005576">
    <property type="term" value="C:extracellular region"/>
    <property type="evidence" value="ECO:0007669"/>
    <property type="project" value="UniProtKB-SubCell"/>
</dbReference>
<dbReference type="Gene3D" id="1.10.287.1060">
    <property type="entry name" value="ESAT-6-like"/>
    <property type="match status" value="1"/>
</dbReference>
<dbReference type="InterPro" id="IPR009416">
    <property type="entry name" value="ESAT-6-like_Myco"/>
</dbReference>
<dbReference type="InterPro" id="IPR036689">
    <property type="entry name" value="ESAT-6-like_sf"/>
</dbReference>
<dbReference type="InterPro" id="IPR010310">
    <property type="entry name" value="T7SS_ESAT-6-like"/>
</dbReference>
<dbReference type="Pfam" id="PF06013">
    <property type="entry name" value="WXG100"/>
    <property type="match status" value="1"/>
</dbReference>
<dbReference type="PIRSF" id="PIRSF037656">
    <property type="entry name" value="DUF1066"/>
    <property type="match status" value="1"/>
</dbReference>
<dbReference type="SUPFAM" id="SSF140453">
    <property type="entry name" value="EsxAB dimer-like"/>
    <property type="match status" value="1"/>
</dbReference>
<proteinExistence type="inferred from homology"/>
<evidence type="ECO:0000250" key="1">
    <source>
        <dbReference type="UniProtKB" id="P0DOA6"/>
    </source>
</evidence>
<evidence type="ECO:0000305" key="2"/>
<comment type="subcellular location">
    <subcellularLocation>
        <location evidence="1">Secreted</location>
    </subcellularLocation>
    <text evidence="1">Probably secreted via the ESX-5 / type VII secretion system (T7SS).</text>
</comment>
<comment type="similarity">
    <text evidence="2">Belongs to the WXG100 family. ESAT-6 subfamily.</text>
</comment>
<sequence>MTINYQFGDVDAHGAMIRALAGLLEAEHQAIISDVLTASDFWGGAGSAACQGFITQLGRNFQVIYEQANAHGQKVQAAGNNMAQTDSAVGSSWA</sequence>
<protein>
    <recommendedName>
        <fullName evidence="1">ESAT-6-like protein EsxI</fullName>
    </recommendedName>
</protein>
<keyword id="KW-1185">Reference proteome</keyword>
<keyword id="KW-0964">Secreted</keyword>
<name>ESXI_MYCTO</name>
<gene>
    <name evidence="1" type="primary">esxI</name>
    <name type="ordered locus">MT1066</name>
</gene>
<accession>P0DOA8</accession>
<accession>L0TEQ6</accession>
<accession>O08120</accession>
<accession>O08122</accession>
<accession>P96364</accession>
<accession>P9WNK0</accession>
<accession>Q9L781</accession>